<protein>
    <recommendedName>
        <fullName evidence="1">Chaperonin GroEL</fullName>
        <ecNumber evidence="1">5.6.1.7</ecNumber>
    </recommendedName>
    <alternativeName>
        <fullName evidence="1">60 kDa chaperonin</fullName>
    </alternativeName>
    <alternativeName>
        <fullName evidence="1">Chaperonin-60</fullName>
        <shortName evidence="1">Cpn60</shortName>
    </alternativeName>
</protein>
<proteinExistence type="inferred from homology"/>
<comment type="function">
    <text evidence="1">Together with its co-chaperonin GroES, plays an essential role in assisting protein folding. The GroEL-GroES system forms a nano-cage that allows encapsulation of the non-native substrate proteins and provides a physical environment optimized to promote and accelerate protein folding.</text>
</comment>
<comment type="catalytic activity">
    <reaction evidence="1">
        <text>ATP + H2O + a folded polypeptide = ADP + phosphate + an unfolded polypeptide.</text>
        <dbReference type="EC" id="5.6.1.7"/>
    </reaction>
</comment>
<comment type="subunit">
    <text evidence="1">Forms a cylinder of 14 subunits composed of two heptameric rings stacked back-to-back. Interacts with the co-chaperonin GroES.</text>
</comment>
<comment type="subcellular location">
    <subcellularLocation>
        <location evidence="1">Cytoplasm</location>
    </subcellularLocation>
</comment>
<comment type="similarity">
    <text evidence="1">Belongs to the chaperonin (HSP60) family.</text>
</comment>
<sequence length="548" mass="57431">MAAKDVKFGNDARIKMLRGVNILADAVKVTLGPKGRNVVLDKSFGSPTITKDGVSVAREIELEDKFENMGAQMVKEVASKANDAAGDGTTTATVLAQSIITEGLKAVAAGMNPMDLKRGIDKAVIAAVEELKKLSVPCSDSKAIAQVGTISANSDSTVGELIAQAMEKVGKEGVITVEEGSGLQDELDVVEGMQFDRGYLSPYFINKPETGSIELESPFILLADKKISNIREMLPVLEAVAKAGKPLLIIAEDVEGEALATLVVNTMRGIVKVAAVKAPGFGDRRKAMLQDIATLTAGTVISEEIGLELEKTTLEDLGQAKRVVINKDTTIIIDGVGDEAAIQGRVAQIRQQIEDATSDYDKEKLQERVAKLAGGVAVIKVGAATEVEMKEKKARVEDALHATRAAVEEGVVAGGGVALIRAAHAIAGLKGDNEDQNVGIKVALRAMESPLRQIVVNAGEEASVIANKVKAGEGSFGYNAYTEEYGDMIAMGILDPTKVTRSALQYAASIAGLMITTECMVTDLPRDDKGADMGAGGMGGMGGMGGMM</sequence>
<accession>A4TRR0</accession>
<name>CH60_YERPP</name>
<dbReference type="EC" id="5.6.1.7" evidence="1"/>
<dbReference type="EMBL" id="CP000668">
    <property type="protein sequence ID" value="ABP41972.1"/>
    <property type="molecule type" value="Genomic_DNA"/>
</dbReference>
<dbReference type="RefSeq" id="WP_002209128.1">
    <property type="nucleotide sequence ID" value="NZ_CP009715.1"/>
</dbReference>
<dbReference type="SMR" id="A4TRR0"/>
<dbReference type="GeneID" id="57974257"/>
<dbReference type="KEGG" id="ypp:YPDSF_3622"/>
<dbReference type="PATRIC" id="fig|386656.14.peg.282"/>
<dbReference type="GO" id="GO:0005737">
    <property type="term" value="C:cytoplasm"/>
    <property type="evidence" value="ECO:0007669"/>
    <property type="project" value="UniProtKB-SubCell"/>
</dbReference>
<dbReference type="GO" id="GO:0005524">
    <property type="term" value="F:ATP binding"/>
    <property type="evidence" value="ECO:0007669"/>
    <property type="project" value="UniProtKB-UniRule"/>
</dbReference>
<dbReference type="GO" id="GO:0140662">
    <property type="term" value="F:ATP-dependent protein folding chaperone"/>
    <property type="evidence" value="ECO:0007669"/>
    <property type="project" value="InterPro"/>
</dbReference>
<dbReference type="GO" id="GO:0016853">
    <property type="term" value="F:isomerase activity"/>
    <property type="evidence" value="ECO:0007669"/>
    <property type="project" value="UniProtKB-KW"/>
</dbReference>
<dbReference type="GO" id="GO:0051082">
    <property type="term" value="F:unfolded protein binding"/>
    <property type="evidence" value="ECO:0007669"/>
    <property type="project" value="UniProtKB-UniRule"/>
</dbReference>
<dbReference type="GO" id="GO:0042026">
    <property type="term" value="P:protein refolding"/>
    <property type="evidence" value="ECO:0007669"/>
    <property type="project" value="UniProtKB-UniRule"/>
</dbReference>
<dbReference type="CDD" id="cd03344">
    <property type="entry name" value="GroEL"/>
    <property type="match status" value="1"/>
</dbReference>
<dbReference type="FunFam" id="1.10.560.10:FF:000001">
    <property type="entry name" value="60 kDa chaperonin"/>
    <property type="match status" value="1"/>
</dbReference>
<dbReference type="FunFam" id="3.50.7.10:FF:000001">
    <property type="entry name" value="60 kDa chaperonin"/>
    <property type="match status" value="1"/>
</dbReference>
<dbReference type="Gene3D" id="3.50.7.10">
    <property type="entry name" value="GroEL"/>
    <property type="match status" value="1"/>
</dbReference>
<dbReference type="Gene3D" id="1.10.560.10">
    <property type="entry name" value="GroEL-like equatorial domain"/>
    <property type="match status" value="1"/>
</dbReference>
<dbReference type="Gene3D" id="3.30.260.10">
    <property type="entry name" value="TCP-1-like chaperonin intermediate domain"/>
    <property type="match status" value="1"/>
</dbReference>
<dbReference type="HAMAP" id="MF_00600">
    <property type="entry name" value="CH60"/>
    <property type="match status" value="1"/>
</dbReference>
<dbReference type="InterPro" id="IPR018370">
    <property type="entry name" value="Chaperonin_Cpn60_CS"/>
</dbReference>
<dbReference type="InterPro" id="IPR001844">
    <property type="entry name" value="Cpn60/GroEL"/>
</dbReference>
<dbReference type="InterPro" id="IPR002423">
    <property type="entry name" value="Cpn60/GroEL/TCP-1"/>
</dbReference>
<dbReference type="InterPro" id="IPR027409">
    <property type="entry name" value="GroEL-like_apical_dom_sf"/>
</dbReference>
<dbReference type="InterPro" id="IPR027413">
    <property type="entry name" value="GROEL-like_equatorial_sf"/>
</dbReference>
<dbReference type="InterPro" id="IPR027410">
    <property type="entry name" value="TCP-1-like_intermed_sf"/>
</dbReference>
<dbReference type="NCBIfam" id="TIGR02348">
    <property type="entry name" value="GroEL"/>
    <property type="match status" value="1"/>
</dbReference>
<dbReference type="NCBIfam" id="NF000592">
    <property type="entry name" value="PRK00013.1"/>
    <property type="match status" value="1"/>
</dbReference>
<dbReference type="NCBIfam" id="NF009487">
    <property type="entry name" value="PRK12849.1"/>
    <property type="match status" value="1"/>
</dbReference>
<dbReference type="NCBIfam" id="NF009488">
    <property type="entry name" value="PRK12850.1"/>
    <property type="match status" value="1"/>
</dbReference>
<dbReference type="NCBIfam" id="NF009489">
    <property type="entry name" value="PRK12851.1"/>
    <property type="match status" value="1"/>
</dbReference>
<dbReference type="PANTHER" id="PTHR45633">
    <property type="entry name" value="60 KDA HEAT SHOCK PROTEIN, MITOCHONDRIAL"/>
    <property type="match status" value="1"/>
</dbReference>
<dbReference type="Pfam" id="PF00118">
    <property type="entry name" value="Cpn60_TCP1"/>
    <property type="match status" value="1"/>
</dbReference>
<dbReference type="PRINTS" id="PR00298">
    <property type="entry name" value="CHAPERONIN60"/>
</dbReference>
<dbReference type="SUPFAM" id="SSF52029">
    <property type="entry name" value="GroEL apical domain-like"/>
    <property type="match status" value="1"/>
</dbReference>
<dbReference type="SUPFAM" id="SSF48592">
    <property type="entry name" value="GroEL equatorial domain-like"/>
    <property type="match status" value="1"/>
</dbReference>
<dbReference type="SUPFAM" id="SSF54849">
    <property type="entry name" value="GroEL-intermediate domain like"/>
    <property type="match status" value="1"/>
</dbReference>
<dbReference type="PROSITE" id="PS00296">
    <property type="entry name" value="CHAPERONINS_CPN60"/>
    <property type="match status" value="1"/>
</dbReference>
<organism>
    <name type="scientific">Yersinia pestis (strain Pestoides F)</name>
    <dbReference type="NCBI Taxonomy" id="386656"/>
    <lineage>
        <taxon>Bacteria</taxon>
        <taxon>Pseudomonadati</taxon>
        <taxon>Pseudomonadota</taxon>
        <taxon>Gammaproteobacteria</taxon>
        <taxon>Enterobacterales</taxon>
        <taxon>Yersiniaceae</taxon>
        <taxon>Yersinia</taxon>
    </lineage>
</organism>
<evidence type="ECO:0000255" key="1">
    <source>
        <dbReference type="HAMAP-Rule" id="MF_00600"/>
    </source>
</evidence>
<gene>
    <name evidence="1" type="primary">groEL</name>
    <name evidence="1" type="synonym">groL</name>
    <name type="ordered locus">YPDSF_3622</name>
</gene>
<keyword id="KW-0067">ATP-binding</keyword>
<keyword id="KW-0143">Chaperone</keyword>
<keyword id="KW-0963">Cytoplasm</keyword>
<keyword id="KW-0413">Isomerase</keyword>
<keyword id="KW-0547">Nucleotide-binding</keyword>
<feature type="chain" id="PRO_1000025850" description="Chaperonin GroEL">
    <location>
        <begin position="1"/>
        <end position="548"/>
    </location>
</feature>
<feature type="binding site" evidence="1">
    <location>
        <begin position="30"/>
        <end position="33"/>
    </location>
    <ligand>
        <name>ATP</name>
        <dbReference type="ChEBI" id="CHEBI:30616"/>
    </ligand>
</feature>
<feature type="binding site" evidence="1">
    <location>
        <position position="51"/>
    </location>
    <ligand>
        <name>ATP</name>
        <dbReference type="ChEBI" id="CHEBI:30616"/>
    </ligand>
</feature>
<feature type="binding site" evidence="1">
    <location>
        <begin position="87"/>
        <end position="91"/>
    </location>
    <ligand>
        <name>ATP</name>
        <dbReference type="ChEBI" id="CHEBI:30616"/>
    </ligand>
</feature>
<feature type="binding site" evidence="1">
    <location>
        <position position="415"/>
    </location>
    <ligand>
        <name>ATP</name>
        <dbReference type="ChEBI" id="CHEBI:30616"/>
    </ligand>
</feature>
<feature type="binding site" evidence="1">
    <location>
        <position position="495"/>
    </location>
    <ligand>
        <name>ATP</name>
        <dbReference type="ChEBI" id="CHEBI:30616"/>
    </ligand>
</feature>
<reference key="1">
    <citation type="submission" date="2007-02" db="EMBL/GenBank/DDBJ databases">
        <title>Complete sequence of chromosome of Yersinia pestis Pestoides F.</title>
        <authorList>
            <consortium name="US DOE Joint Genome Institute"/>
            <person name="Copeland A."/>
            <person name="Lucas S."/>
            <person name="Lapidus A."/>
            <person name="Barry K."/>
            <person name="Detter J.C."/>
            <person name="Glavina del Rio T."/>
            <person name="Hammon N."/>
            <person name="Israni S."/>
            <person name="Dalin E."/>
            <person name="Tice H."/>
            <person name="Pitluck S."/>
            <person name="Di Bartolo G."/>
            <person name="Chain P."/>
            <person name="Malfatti S."/>
            <person name="Shin M."/>
            <person name="Vergez L."/>
            <person name="Schmutz J."/>
            <person name="Larimer F."/>
            <person name="Land M."/>
            <person name="Hauser L."/>
            <person name="Worsham P."/>
            <person name="Chu M."/>
            <person name="Bearden S."/>
            <person name="Garcia E."/>
            <person name="Richardson P."/>
        </authorList>
    </citation>
    <scope>NUCLEOTIDE SEQUENCE [LARGE SCALE GENOMIC DNA]</scope>
    <source>
        <strain>Pestoides F</strain>
    </source>
</reference>